<keyword id="KW-0997">Cell inner membrane</keyword>
<keyword id="KW-1003">Cell membrane</keyword>
<keyword id="KW-0328">Glycosyltransferase</keyword>
<keyword id="KW-0460">Magnesium</keyword>
<keyword id="KW-0472">Membrane</keyword>
<keyword id="KW-0479">Metal-binding</keyword>
<keyword id="KW-0660">Purine salvage</keyword>
<keyword id="KW-0808">Transferase</keyword>
<proteinExistence type="inferred from homology"/>
<name>XGPT_ECO5E</name>
<comment type="function">
    <text evidence="1">Purine salvage pathway enzyme that catalyzes the transfer of the ribosyl-5-phosphate group from 5-phospho-alpha-D-ribose 1-diphosphate (PRPP) to the N9 position of the 6-oxopurines guanine and xanthine to form the corresponding ribonucleotides GMP (guanosine 5'-monophosphate) and XMP (xanthosine 5'-monophosphate), with the release of PPi. To a lesser extent, also acts on hypoxanthine.</text>
</comment>
<comment type="catalytic activity">
    <reaction evidence="1">
        <text>GMP + diphosphate = guanine + 5-phospho-alpha-D-ribose 1-diphosphate</text>
        <dbReference type="Rhea" id="RHEA:25424"/>
        <dbReference type="ChEBI" id="CHEBI:16235"/>
        <dbReference type="ChEBI" id="CHEBI:33019"/>
        <dbReference type="ChEBI" id="CHEBI:58017"/>
        <dbReference type="ChEBI" id="CHEBI:58115"/>
    </reaction>
    <physiologicalReaction direction="right-to-left" evidence="1">
        <dbReference type="Rhea" id="RHEA:25426"/>
    </physiologicalReaction>
</comment>
<comment type="catalytic activity">
    <reaction evidence="1">
        <text>XMP + diphosphate = xanthine + 5-phospho-alpha-D-ribose 1-diphosphate</text>
        <dbReference type="Rhea" id="RHEA:10800"/>
        <dbReference type="ChEBI" id="CHEBI:17712"/>
        <dbReference type="ChEBI" id="CHEBI:33019"/>
        <dbReference type="ChEBI" id="CHEBI:57464"/>
        <dbReference type="ChEBI" id="CHEBI:58017"/>
        <dbReference type="EC" id="2.4.2.22"/>
    </reaction>
    <physiologicalReaction direction="right-to-left" evidence="1">
        <dbReference type="Rhea" id="RHEA:10802"/>
    </physiologicalReaction>
</comment>
<comment type="catalytic activity">
    <reaction evidence="1">
        <text>IMP + diphosphate = hypoxanthine + 5-phospho-alpha-D-ribose 1-diphosphate</text>
        <dbReference type="Rhea" id="RHEA:17973"/>
        <dbReference type="ChEBI" id="CHEBI:17368"/>
        <dbReference type="ChEBI" id="CHEBI:33019"/>
        <dbReference type="ChEBI" id="CHEBI:58017"/>
        <dbReference type="ChEBI" id="CHEBI:58053"/>
    </reaction>
    <physiologicalReaction direction="right-to-left" evidence="1">
        <dbReference type="Rhea" id="RHEA:17975"/>
    </physiologicalReaction>
</comment>
<comment type="cofactor">
    <cofactor evidence="1">
        <name>Mg(2+)</name>
        <dbReference type="ChEBI" id="CHEBI:18420"/>
    </cofactor>
</comment>
<comment type="pathway">
    <text evidence="1">Purine metabolism; GMP biosynthesis via salvage pathway; GMP from guanine: step 1/1.</text>
</comment>
<comment type="pathway">
    <text evidence="1">Purine metabolism; XMP biosynthesis via salvage pathway; XMP from xanthine: step 1/1.</text>
</comment>
<comment type="subunit">
    <text evidence="1">Homotetramer.</text>
</comment>
<comment type="subcellular location">
    <subcellularLocation>
        <location evidence="1">Cell inner membrane</location>
        <topology evidence="1">Peripheral membrane protein</topology>
    </subcellularLocation>
</comment>
<comment type="similarity">
    <text evidence="1">Belongs to the purine/pyrimidine phosphoribosyltransferase family. XGPT subfamily.</text>
</comment>
<organism>
    <name type="scientific">Escherichia coli O157:H7 (strain EC4115 / EHEC)</name>
    <dbReference type="NCBI Taxonomy" id="444450"/>
    <lineage>
        <taxon>Bacteria</taxon>
        <taxon>Pseudomonadati</taxon>
        <taxon>Pseudomonadota</taxon>
        <taxon>Gammaproteobacteria</taxon>
        <taxon>Enterobacterales</taxon>
        <taxon>Enterobacteriaceae</taxon>
        <taxon>Escherichia</taxon>
    </lineage>
</organism>
<evidence type="ECO:0000255" key="1">
    <source>
        <dbReference type="HAMAP-Rule" id="MF_01903"/>
    </source>
</evidence>
<accession>B5Z1I2</accession>
<sequence>MSEKYIVTWDMLQIHARKLASRLMPSEQWKGIIAVSRGGLVPGALLARELGIRHVDTVCISSYDHDNQRELKVLKRAEGDGEGFIVIDDLVDTGGTAVAIREMYPKAHFVTIFAKPAGRPLVDDYVVDIPQDTWIEQPWDMGVVFVPPISGR</sequence>
<gene>
    <name evidence="1" type="primary">gpt</name>
    <name type="ordered locus">ECH74115_0283</name>
</gene>
<protein>
    <recommendedName>
        <fullName evidence="1">Xanthine-guanine phosphoribosyltransferase</fullName>
        <shortName evidence="1">XGPRT</shortName>
        <ecNumber evidence="1">2.4.2.-</ecNumber>
        <ecNumber evidence="1">2.4.2.22</ecNumber>
    </recommendedName>
    <alternativeName>
        <fullName evidence="1">Xanthine phosphoribosyltransferase</fullName>
    </alternativeName>
</protein>
<dbReference type="EC" id="2.4.2.-" evidence="1"/>
<dbReference type="EC" id="2.4.2.22" evidence="1"/>
<dbReference type="EMBL" id="CP001164">
    <property type="protein sequence ID" value="ACI36585.1"/>
    <property type="molecule type" value="Genomic_DNA"/>
</dbReference>
<dbReference type="RefSeq" id="WP_001291990.1">
    <property type="nucleotide sequence ID" value="NC_011353.1"/>
</dbReference>
<dbReference type="SMR" id="B5Z1I2"/>
<dbReference type="GeneID" id="93777155"/>
<dbReference type="KEGG" id="ecf:ECH74115_0283"/>
<dbReference type="HOGENOM" id="CLU_080904_3_0_6"/>
<dbReference type="UniPathway" id="UPA00602">
    <property type="reaction ID" value="UER00658"/>
</dbReference>
<dbReference type="UniPathway" id="UPA00909">
    <property type="reaction ID" value="UER00887"/>
</dbReference>
<dbReference type="GO" id="GO:0005829">
    <property type="term" value="C:cytosol"/>
    <property type="evidence" value="ECO:0007669"/>
    <property type="project" value="TreeGrafter"/>
</dbReference>
<dbReference type="GO" id="GO:0005886">
    <property type="term" value="C:plasma membrane"/>
    <property type="evidence" value="ECO:0007669"/>
    <property type="project" value="UniProtKB-SubCell"/>
</dbReference>
<dbReference type="GO" id="GO:0052657">
    <property type="term" value="F:guanine phosphoribosyltransferase activity"/>
    <property type="evidence" value="ECO:0007669"/>
    <property type="project" value="RHEA"/>
</dbReference>
<dbReference type="GO" id="GO:0004422">
    <property type="term" value="F:hypoxanthine phosphoribosyltransferase activity"/>
    <property type="evidence" value="ECO:0007669"/>
    <property type="project" value="TreeGrafter"/>
</dbReference>
<dbReference type="GO" id="GO:0000287">
    <property type="term" value="F:magnesium ion binding"/>
    <property type="evidence" value="ECO:0007669"/>
    <property type="project" value="UniProtKB-UniRule"/>
</dbReference>
<dbReference type="GO" id="GO:0000310">
    <property type="term" value="F:xanthine phosphoribosyltransferase activity"/>
    <property type="evidence" value="ECO:0007669"/>
    <property type="project" value="UniProtKB-UniRule"/>
</dbReference>
<dbReference type="GO" id="GO:0032263">
    <property type="term" value="P:GMP salvage"/>
    <property type="evidence" value="ECO:0007669"/>
    <property type="project" value="UniProtKB-UniRule"/>
</dbReference>
<dbReference type="GO" id="GO:0032264">
    <property type="term" value="P:IMP salvage"/>
    <property type="evidence" value="ECO:0007669"/>
    <property type="project" value="TreeGrafter"/>
</dbReference>
<dbReference type="GO" id="GO:0006166">
    <property type="term" value="P:purine ribonucleoside salvage"/>
    <property type="evidence" value="ECO:0007669"/>
    <property type="project" value="UniProtKB-KW"/>
</dbReference>
<dbReference type="GO" id="GO:0032265">
    <property type="term" value="P:XMP salvage"/>
    <property type="evidence" value="ECO:0007669"/>
    <property type="project" value="UniProtKB-UniRule"/>
</dbReference>
<dbReference type="CDD" id="cd06223">
    <property type="entry name" value="PRTases_typeI"/>
    <property type="match status" value="1"/>
</dbReference>
<dbReference type="FunFam" id="3.40.50.2020:FF:000009">
    <property type="entry name" value="Xanthine phosphoribosyltransferase"/>
    <property type="match status" value="1"/>
</dbReference>
<dbReference type="Gene3D" id="3.40.50.2020">
    <property type="match status" value="1"/>
</dbReference>
<dbReference type="HAMAP" id="MF_01903">
    <property type="entry name" value="XGPRT"/>
    <property type="match status" value="1"/>
</dbReference>
<dbReference type="InterPro" id="IPR000836">
    <property type="entry name" value="PRibTrfase_dom"/>
</dbReference>
<dbReference type="InterPro" id="IPR029057">
    <property type="entry name" value="PRTase-like"/>
</dbReference>
<dbReference type="InterPro" id="IPR023747">
    <property type="entry name" value="Xanthine_Guanine_PRibTrfase"/>
</dbReference>
<dbReference type="NCBIfam" id="NF006613">
    <property type="entry name" value="PRK09177.1"/>
    <property type="match status" value="1"/>
</dbReference>
<dbReference type="PANTHER" id="PTHR39563">
    <property type="entry name" value="XANTHINE PHOSPHORIBOSYLTRANSFERASE"/>
    <property type="match status" value="1"/>
</dbReference>
<dbReference type="PANTHER" id="PTHR39563:SF1">
    <property type="entry name" value="XANTHINE-GUANINE PHOSPHORIBOSYLTRANSFERASE"/>
    <property type="match status" value="1"/>
</dbReference>
<dbReference type="Pfam" id="PF00156">
    <property type="entry name" value="Pribosyltran"/>
    <property type="match status" value="1"/>
</dbReference>
<dbReference type="SUPFAM" id="SSF53271">
    <property type="entry name" value="PRTase-like"/>
    <property type="match status" value="1"/>
</dbReference>
<dbReference type="PROSITE" id="PS00103">
    <property type="entry name" value="PUR_PYR_PR_TRANSFER"/>
    <property type="match status" value="1"/>
</dbReference>
<feature type="chain" id="PRO_1000188740" description="Xanthine-guanine phosphoribosyltransferase">
    <location>
        <begin position="1"/>
        <end position="152"/>
    </location>
</feature>
<feature type="binding site" evidence="1">
    <location>
        <begin position="37"/>
        <end position="38"/>
    </location>
    <ligand>
        <name>5-phospho-alpha-D-ribose 1-diphosphate</name>
        <dbReference type="ChEBI" id="CHEBI:58017"/>
    </ligand>
</feature>
<feature type="binding site" evidence="1">
    <location>
        <position position="69"/>
    </location>
    <ligand>
        <name>5-phospho-alpha-D-ribose 1-diphosphate</name>
        <dbReference type="ChEBI" id="CHEBI:58017"/>
    </ligand>
</feature>
<feature type="binding site" evidence="1">
    <location>
        <position position="69"/>
    </location>
    <ligand>
        <name>GMP</name>
        <dbReference type="ChEBI" id="CHEBI:58115"/>
    </ligand>
</feature>
<feature type="binding site" evidence="1">
    <location>
        <begin position="88"/>
        <end position="96"/>
    </location>
    <ligand>
        <name>5-phospho-alpha-D-ribose 1-diphosphate</name>
        <dbReference type="ChEBI" id="CHEBI:58017"/>
    </ligand>
</feature>
<feature type="binding site" evidence="1">
    <location>
        <position position="89"/>
    </location>
    <ligand>
        <name>Mg(2+)</name>
        <dbReference type="ChEBI" id="CHEBI:18420"/>
    </ligand>
</feature>
<feature type="binding site" evidence="1">
    <location>
        <begin position="92"/>
        <end position="96"/>
    </location>
    <ligand>
        <name>GMP</name>
        <dbReference type="ChEBI" id="CHEBI:58115"/>
    </ligand>
</feature>
<feature type="binding site" evidence="1">
    <location>
        <position position="92"/>
    </location>
    <ligand>
        <name>guanine</name>
        <dbReference type="ChEBI" id="CHEBI:16235"/>
    </ligand>
</feature>
<feature type="binding site" evidence="1">
    <location>
        <position position="92"/>
    </location>
    <ligand>
        <name>xanthine</name>
        <dbReference type="ChEBI" id="CHEBI:17712"/>
    </ligand>
</feature>
<feature type="binding site" evidence="1">
    <location>
        <begin position="134"/>
        <end position="135"/>
    </location>
    <ligand>
        <name>GMP</name>
        <dbReference type="ChEBI" id="CHEBI:58115"/>
    </ligand>
</feature>
<feature type="binding site" evidence="1">
    <location>
        <position position="135"/>
    </location>
    <ligand>
        <name>guanine</name>
        <dbReference type="ChEBI" id="CHEBI:16235"/>
    </ligand>
</feature>
<feature type="binding site" evidence="1">
    <location>
        <position position="135"/>
    </location>
    <ligand>
        <name>xanthine</name>
        <dbReference type="ChEBI" id="CHEBI:17712"/>
    </ligand>
</feature>
<reference key="1">
    <citation type="journal article" date="2011" name="Proc. Natl. Acad. Sci. U.S.A.">
        <title>Genomic anatomy of Escherichia coli O157:H7 outbreaks.</title>
        <authorList>
            <person name="Eppinger M."/>
            <person name="Mammel M.K."/>
            <person name="Leclerc J.E."/>
            <person name="Ravel J."/>
            <person name="Cebula T.A."/>
        </authorList>
    </citation>
    <scope>NUCLEOTIDE SEQUENCE [LARGE SCALE GENOMIC DNA]</scope>
    <source>
        <strain>EC4115 / EHEC</strain>
    </source>
</reference>